<name>PLSB_PHAVU</name>
<reference key="1">
    <citation type="journal article" date="1995" name="Plant Physiol.">
        <title>Cloning and sequencing of a full-length cDNA coding for sn-glycerol-3-phosphate acyltransferase from Phaseolus vulgaris.</title>
        <authorList>
            <person name="Fritz M."/>
            <person name="Heinz E."/>
            <person name="Wolter F.P."/>
        </authorList>
    </citation>
    <scope>NUCLEOTIDE SEQUENCE [MRNA]</scope>
    <source>
        <strain>cv. Annabel</strain>
        <tissue>Leaf</tissue>
    </source>
</reference>
<accession>Q43822</accession>
<comment type="function">
    <text>Esterifies acyl-group from acyl-ACP to the sn-1 position of glycerol-3-phosphate. The enzyme from chilling-resistant plants discriminates against non-fluid palmitic acid and selects oleic acid whereas the enzyme from sensitive plants accepts both fatty acids.</text>
</comment>
<comment type="catalytic activity">
    <reaction>
        <text>sn-glycerol 3-phosphate + an acyl-CoA = a 1-acyl-sn-glycero-3-phosphate + CoA</text>
        <dbReference type="Rhea" id="RHEA:15325"/>
        <dbReference type="ChEBI" id="CHEBI:57287"/>
        <dbReference type="ChEBI" id="CHEBI:57597"/>
        <dbReference type="ChEBI" id="CHEBI:57970"/>
        <dbReference type="ChEBI" id="CHEBI:58342"/>
        <dbReference type="EC" id="2.3.1.15"/>
    </reaction>
</comment>
<comment type="pathway">
    <text>Phospholipid metabolism; CDP-diacylglycerol biosynthesis; CDP-diacylglycerol from sn-glycerol 3-phosphate: step 1/3.</text>
</comment>
<comment type="subcellular location">
    <subcellularLocation>
        <location>Plastid</location>
        <location>Chloroplast stroma</location>
    </subcellularLocation>
</comment>
<comment type="domain">
    <text evidence="1">The HXXXXD motif is essential for acyltransferase activity and may constitute the binding site for the phosphate moiety of the glycerol-3-phosphate.</text>
</comment>
<comment type="similarity">
    <text evidence="4">Belongs to the GPAT/DAPAT family.</text>
</comment>
<keyword id="KW-0012">Acyltransferase</keyword>
<keyword id="KW-0150">Chloroplast</keyword>
<keyword id="KW-0444">Lipid biosynthesis</keyword>
<keyword id="KW-0443">Lipid metabolism</keyword>
<keyword id="KW-0594">Phospholipid biosynthesis</keyword>
<keyword id="KW-1208">Phospholipid metabolism</keyword>
<keyword id="KW-0934">Plastid</keyword>
<keyword id="KW-0808">Transferase</keyword>
<keyword id="KW-0809">Transit peptide</keyword>
<evidence type="ECO:0000250" key="1"/>
<evidence type="ECO:0000255" key="2"/>
<evidence type="ECO:0000256" key="3">
    <source>
        <dbReference type="SAM" id="MobiDB-lite"/>
    </source>
</evidence>
<evidence type="ECO:0000305" key="4"/>
<feature type="transit peptide" description="Chloroplast" evidence="2">
    <location>
        <begin position="1"/>
        <end position="96"/>
    </location>
</feature>
<feature type="chain" id="PRO_0000024699" description="Glycerol-3-phosphate acyltransferase, chloroplastic">
    <location>
        <begin position="97"/>
        <end position="461"/>
    </location>
</feature>
<feature type="region of interest" description="Disordered" evidence="3">
    <location>
        <begin position="47"/>
        <end position="88"/>
    </location>
</feature>
<feature type="short sequence motif" description="HXXXXD motif">
    <location>
        <begin position="231"/>
        <end position="236"/>
    </location>
</feature>
<feature type="compositionally biased region" description="Low complexity" evidence="3">
    <location>
        <begin position="47"/>
        <end position="76"/>
    </location>
</feature>
<organism>
    <name type="scientific">Phaseolus vulgaris</name>
    <name type="common">Kidney bean</name>
    <name type="synonym">French bean</name>
    <dbReference type="NCBI Taxonomy" id="3885"/>
    <lineage>
        <taxon>Eukaryota</taxon>
        <taxon>Viridiplantae</taxon>
        <taxon>Streptophyta</taxon>
        <taxon>Embryophyta</taxon>
        <taxon>Tracheophyta</taxon>
        <taxon>Spermatophyta</taxon>
        <taxon>Magnoliopsida</taxon>
        <taxon>eudicotyledons</taxon>
        <taxon>Gunneridae</taxon>
        <taxon>Pentapetalae</taxon>
        <taxon>rosids</taxon>
        <taxon>fabids</taxon>
        <taxon>Fabales</taxon>
        <taxon>Fabaceae</taxon>
        <taxon>Papilionoideae</taxon>
        <taxon>50 kb inversion clade</taxon>
        <taxon>NPAAA clade</taxon>
        <taxon>indigoferoid/millettioid clade</taxon>
        <taxon>Phaseoleae</taxon>
        <taxon>Phaseolus</taxon>
    </lineage>
</organism>
<sequence length="461" mass="50697">MSMTGSSAYYVAHAIPPFLRLSNKTMLLLSTPPTTFFPTSTTPRVTLLSSTSSSSSSSISLRSSTAPSPSCSSVTPKDNCLASAKHSPPNMSASVSSRTFLNAQSEQDVFAGIKKEVEAGSLPANVAAGMEEVYNNYKKAVIQSGDPKANEIVLSNMIALLDRVFLDVTDPFVFQPHHKAKREPFDYYVFGQNYIRPLVDFKNAYVGNMPLFIEMEEKLKQGHNIILMSNHQTEADPAIISLLLETRLPYIAENLTYVAGDRVITDPLSKPFSIGRNLICVYSKKHMLDDPALVEMKRTANIRALKEMAMLLRNGSQLVWIAPSGGRDRPDAQTREWVPAPFDISSVDNMRRLVEHSGPPGHVYPLAILCHDIMPPPLKVEKEIGEKRIICFHGAGISVAPAISFSETTATCENPEKAKEVFSKALYNSVTEQYNVLKSAIQGKKGFEASTPVVTLSQPWK</sequence>
<gene>
    <name type="primary">PLSB</name>
</gene>
<proteinExistence type="evidence at transcript level"/>
<protein>
    <recommendedName>
        <fullName>Glycerol-3-phosphate acyltransferase, chloroplastic</fullName>
        <shortName>GPAT</shortName>
        <ecNumber>2.3.1.15</ecNumber>
    </recommendedName>
</protein>
<dbReference type="EC" id="2.3.1.15"/>
<dbReference type="EMBL" id="X79722">
    <property type="protein sequence ID" value="CAA56159.1"/>
    <property type="molecule type" value="mRNA"/>
</dbReference>
<dbReference type="PIR" id="T11819">
    <property type="entry name" value="T11819"/>
</dbReference>
<dbReference type="SMR" id="Q43822"/>
<dbReference type="eggNOG" id="ENOG502QRHE">
    <property type="taxonomic scope" value="Eukaryota"/>
</dbReference>
<dbReference type="UniPathway" id="UPA00557">
    <property type="reaction ID" value="UER00612"/>
</dbReference>
<dbReference type="GO" id="GO:0009570">
    <property type="term" value="C:chloroplast stroma"/>
    <property type="evidence" value="ECO:0007669"/>
    <property type="project" value="UniProtKB-SubCell"/>
</dbReference>
<dbReference type="GO" id="GO:0004366">
    <property type="term" value="F:glycerol-3-phosphate O-acyltransferase activity"/>
    <property type="evidence" value="ECO:0007669"/>
    <property type="project" value="UniProtKB-EC"/>
</dbReference>
<dbReference type="GO" id="GO:0016024">
    <property type="term" value="P:CDP-diacylglycerol biosynthetic process"/>
    <property type="evidence" value="ECO:0007669"/>
    <property type="project" value="UniProtKB-UniPathway"/>
</dbReference>
<dbReference type="GO" id="GO:0006655">
    <property type="term" value="P:phosphatidylglycerol biosynthetic process"/>
    <property type="evidence" value="ECO:0007669"/>
    <property type="project" value="TreeGrafter"/>
</dbReference>
<dbReference type="Gene3D" id="3.40.1130.10">
    <property type="entry name" value="Glycerol-3-phosphate (1)-acyltransferase"/>
    <property type="match status" value="1"/>
</dbReference>
<dbReference type="Gene3D" id="1.10.1200.50">
    <property type="entry name" value="Glycerol-3-phosphate acyltransferase, alpha helical bundle, N-terminal"/>
    <property type="match status" value="1"/>
</dbReference>
<dbReference type="InterPro" id="IPR016222">
    <property type="entry name" value="G3P_O-acylTrfase_chlp"/>
</dbReference>
<dbReference type="InterPro" id="IPR023083">
    <property type="entry name" value="G3P_O-acylTrfase_N"/>
</dbReference>
<dbReference type="InterPro" id="IPR038114">
    <property type="entry name" value="GPAT_N_sf"/>
</dbReference>
<dbReference type="InterPro" id="IPR002123">
    <property type="entry name" value="Plipid/glycerol_acylTrfase"/>
</dbReference>
<dbReference type="PANTHER" id="PTHR35695">
    <property type="entry name" value="GLYCEROL-3-PHOSPHATE ACYLTRANSFERASE, CHLOROPLASTIC"/>
    <property type="match status" value="1"/>
</dbReference>
<dbReference type="PANTHER" id="PTHR35695:SF1">
    <property type="entry name" value="GLYCEROL-3-PHOSPHATE ACYLTRANSFERASE, CHLOROPLASTIC"/>
    <property type="match status" value="1"/>
</dbReference>
<dbReference type="Pfam" id="PF01553">
    <property type="entry name" value="Acyltransferase"/>
    <property type="match status" value="1"/>
</dbReference>
<dbReference type="Pfam" id="PF14829">
    <property type="entry name" value="GPAT_N"/>
    <property type="match status" value="1"/>
</dbReference>
<dbReference type="PIRSF" id="PIRSF000431">
    <property type="entry name" value="Glycerol-3-P_O-acyltransfrase"/>
    <property type="match status" value="1"/>
</dbReference>
<dbReference type="SMART" id="SM00563">
    <property type="entry name" value="PlsC"/>
    <property type="match status" value="1"/>
</dbReference>
<dbReference type="SUPFAM" id="SSF69593">
    <property type="entry name" value="Glycerol-3-phosphate (1)-acyltransferase"/>
    <property type="match status" value="1"/>
</dbReference>